<protein>
    <recommendedName>
        <fullName evidence="1">Transcription antitermination protein NusB</fullName>
    </recommendedName>
    <alternativeName>
        <fullName evidence="1">Antitermination factor NusB</fullName>
    </alternativeName>
</protein>
<gene>
    <name evidence="1" type="primary">nusB</name>
    <name type="ordered locus">Noca_2418</name>
</gene>
<feature type="chain" id="PRO_1000023757" description="Transcription antitermination protein NusB">
    <location>
        <begin position="1"/>
        <end position="135"/>
    </location>
</feature>
<reference key="1">
    <citation type="submission" date="2006-12" db="EMBL/GenBank/DDBJ databases">
        <title>Complete sequence of chromosome 1 of Nocardioides sp. JS614.</title>
        <authorList>
            <person name="Copeland A."/>
            <person name="Lucas S."/>
            <person name="Lapidus A."/>
            <person name="Barry K."/>
            <person name="Detter J.C."/>
            <person name="Glavina del Rio T."/>
            <person name="Hammon N."/>
            <person name="Israni S."/>
            <person name="Dalin E."/>
            <person name="Tice H."/>
            <person name="Pitluck S."/>
            <person name="Thompson L.S."/>
            <person name="Brettin T."/>
            <person name="Bruce D."/>
            <person name="Han C."/>
            <person name="Tapia R."/>
            <person name="Schmutz J."/>
            <person name="Larimer F."/>
            <person name="Land M."/>
            <person name="Hauser L."/>
            <person name="Kyrpides N."/>
            <person name="Kim E."/>
            <person name="Mattes T."/>
            <person name="Gossett J."/>
            <person name="Richardson P."/>
        </authorList>
    </citation>
    <scope>NUCLEOTIDE SEQUENCE [LARGE SCALE GENOMIC DNA]</scope>
    <source>
        <strain>ATCC BAA-499 / JS614</strain>
    </source>
</reference>
<keyword id="KW-1185">Reference proteome</keyword>
<keyword id="KW-0694">RNA-binding</keyword>
<keyword id="KW-0804">Transcription</keyword>
<keyword id="KW-0889">Transcription antitermination</keyword>
<keyword id="KW-0805">Transcription regulation</keyword>
<comment type="function">
    <text evidence="1">Involved in transcription antitermination. Required for transcription of ribosomal RNA (rRNA) genes. Binds specifically to the boxA antiterminator sequence of the ribosomal RNA (rrn) operons.</text>
</comment>
<comment type="similarity">
    <text evidence="1">Belongs to the NusB family.</text>
</comment>
<evidence type="ECO:0000255" key="1">
    <source>
        <dbReference type="HAMAP-Rule" id="MF_00073"/>
    </source>
</evidence>
<accession>A1SJD8</accession>
<proteinExistence type="inferred from homology"/>
<dbReference type="EMBL" id="CP000509">
    <property type="protein sequence ID" value="ABL81923.1"/>
    <property type="molecule type" value="Genomic_DNA"/>
</dbReference>
<dbReference type="RefSeq" id="WP_011755864.1">
    <property type="nucleotide sequence ID" value="NC_008699.1"/>
</dbReference>
<dbReference type="SMR" id="A1SJD8"/>
<dbReference type="STRING" id="196162.Noca_2418"/>
<dbReference type="KEGG" id="nca:Noca_2418"/>
<dbReference type="eggNOG" id="COG0781">
    <property type="taxonomic scope" value="Bacteria"/>
</dbReference>
<dbReference type="HOGENOM" id="CLU_087843_2_3_11"/>
<dbReference type="OrthoDB" id="3528057at2"/>
<dbReference type="Proteomes" id="UP000000640">
    <property type="component" value="Chromosome"/>
</dbReference>
<dbReference type="GO" id="GO:0005829">
    <property type="term" value="C:cytosol"/>
    <property type="evidence" value="ECO:0007669"/>
    <property type="project" value="TreeGrafter"/>
</dbReference>
<dbReference type="GO" id="GO:0003723">
    <property type="term" value="F:RNA binding"/>
    <property type="evidence" value="ECO:0007669"/>
    <property type="project" value="UniProtKB-UniRule"/>
</dbReference>
<dbReference type="GO" id="GO:0006353">
    <property type="term" value="P:DNA-templated transcription termination"/>
    <property type="evidence" value="ECO:0007669"/>
    <property type="project" value="UniProtKB-UniRule"/>
</dbReference>
<dbReference type="GO" id="GO:0031564">
    <property type="term" value="P:transcription antitermination"/>
    <property type="evidence" value="ECO:0007669"/>
    <property type="project" value="UniProtKB-KW"/>
</dbReference>
<dbReference type="Gene3D" id="1.10.940.10">
    <property type="entry name" value="NusB-like"/>
    <property type="match status" value="1"/>
</dbReference>
<dbReference type="HAMAP" id="MF_00073">
    <property type="entry name" value="NusB"/>
    <property type="match status" value="1"/>
</dbReference>
<dbReference type="InterPro" id="IPR035926">
    <property type="entry name" value="NusB-like_sf"/>
</dbReference>
<dbReference type="InterPro" id="IPR011605">
    <property type="entry name" value="NusB_fam"/>
</dbReference>
<dbReference type="InterPro" id="IPR006027">
    <property type="entry name" value="NusB_RsmB_TIM44"/>
</dbReference>
<dbReference type="NCBIfam" id="TIGR01951">
    <property type="entry name" value="nusB"/>
    <property type="match status" value="1"/>
</dbReference>
<dbReference type="PANTHER" id="PTHR11078:SF3">
    <property type="entry name" value="ANTITERMINATION NUSB DOMAIN-CONTAINING PROTEIN"/>
    <property type="match status" value="1"/>
</dbReference>
<dbReference type="PANTHER" id="PTHR11078">
    <property type="entry name" value="N UTILIZATION SUBSTANCE PROTEIN B-RELATED"/>
    <property type="match status" value="1"/>
</dbReference>
<dbReference type="Pfam" id="PF01029">
    <property type="entry name" value="NusB"/>
    <property type="match status" value="1"/>
</dbReference>
<dbReference type="SUPFAM" id="SSF48013">
    <property type="entry name" value="NusB-like"/>
    <property type="match status" value="1"/>
</dbReference>
<name>NUSB_NOCSJ</name>
<sequence length="135" mass="14579">MSARSKARKRALDVLFASDVRGEDAVAALDRAIAEGEGPTNDYTATLVRGVVEHQARIDELLSSYSHGWALDRMPAVDRNVLRLGVWELLYADDVPDAVAVSEAMALVTDLSTDESPQFVNGILGSIVRNKPSLA</sequence>
<organism>
    <name type="scientific">Nocardioides sp. (strain ATCC BAA-499 / JS614)</name>
    <dbReference type="NCBI Taxonomy" id="196162"/>
    <lineage>
        <taxon>Bacteria</taxon>
        <taxon>Bacillati</taxon>
        <taxon>Actinomycetota</taxon>
        <taxon>Actinomycetes</taxon>
        <taxon>Propionibacteriales</taxon>
        <taxon>Nocardioidaceae</taxon>
        <taxon>Nocardioides</taxon>
    </lineage>
</organism>